<evidence type="ECO:0000255" key="1">
    <source>
        <dbReference type="HAMAP-Rule" id="MF_00235"/>
    </source>
</evidence>
<dbReference type="EC" id="2.7.4.3" evidence="1"/>
<dbReference type="EMBL" id="BA000031">
    <property type="protein sequence ID" value="BAC59085.1"/>
    <property type="molecule type" value="Genomic_DNA"/>
</dbReference>
<dbReference type="RefSeq" id="NP_797201.1">
    <property type="nucleotide sequence ID" value="NC_004603.1"/>
</dbReference>
<dbReference type="RefSeq" id="WP_005454556.1">
    <property type="nucleotide sequence ID" value="NC_004603.1"/>
</dbReference>
<dbReference type="SMR" id="Q87RH4"/>
<dbReference type="GeneID" id="1188319"/>
<dbReference type="KEGG" id="vpa:VP0822"/>
<dbReference type="PATRIC" id="fig|223926.6.peg.779"/>
<dbReference type="eggNOG" id="COG0563">
    <property type="taxonomic scope" value="Bacteria"/>
</dbReference>
<dbReference type="HOGENOM" id="CLU_032354_1_2_6"/>
<dbReference type="UniPathway" id="UPA00588">
    <property type="reaction ID" value="UER00649"/>
</dbReference>
<dbReference type="Proteomes" id="UP000002493">
    <property type="component" value="Chromosome 1"/>
</dbReference>
<dbReference type="GO" id="GO:0005737">
    <property type="term" value="C:cytoplasm"/>
    <property type="evidence" value="ECO:0007669"/>
    <property type="project" value="UniProtKB-SubCell"/>
</dbReference>
<dbReference type="GO" id="GO:0004017">
    <property type="term" value="F:adenylate kinase activity"/>
    <property type="evidence" value="ECO:0007669"/>
    <property type="project" value="UniProtKB-UniRule"/>
</dbReference>
<dbReference type="GO" id="GO:0005524">
    <property type="term" value="F:ATP binding"/>
    <property type="evidence" value="ECO:0007669"/>
    <property type="project" value="UniProtKB-UniRule"/>
</dbReference>
<dbReference type="GO" id="GO:0044209">
    <property type="term" value="P:AMP salvage"/>
    <property type="evidence" value="ECO:0007669"/>
    <property type="project" value="UniProtKB-UniRule"/>
</dbReference>
<dbReference type="CDD" id="cd01428">
    <property type="entry name" value="ADK"/>
    <property type="match status" value="1"/>
</dbReference>
<dbReference type="FunFam" id="3.40.50.300:FF:000106">
    <property type="entry name" value="Adenylate kinase mitochondrial"/>
    <property type="match status" value="1"/>
</dbReference>
<dbReference type="Gene3D" id="3.40.50.300">
    <property type="entry name" value="P-loop containing nucleotide triphosphate hydrolases"/>
    <property type="match status" value="1"/>
</dbReference>
<dbReference type="HAMAP" id="MF_00235">
    <property type="entry name" value="Adenylate_kinase_Adk"/>
    <property type="match status" value="1"/>
</dbReference>
<dbReference type="InterPro" id="IPR006259">
    <property type="entry name" value="Adenyl_kin_sub"/>
</dbReference>
<dbReference type="InterPro" id="IPR000850">
    <property type="entry name" value="Adenylat/UMP-CMP_kin"/>
</dbReference>
<dbReference type="InterPro" id="IPR033690">
    <property type="entry name" value="Adenylat_kinase_CS"/>
</dbReference>
<dbReference type="InterPro" id="IPR007862">
    <property type="entry name" value="Adenylate_kinase_lid-dom"/>
</dbReference>
<dbReference type="InterPro" id="IPR027417">
    <property type="entry name" value="P-loop_NTPase"/>
</dbReference>
<dbReference type="NCBIfam" id="TIGR01351">
    <property type="entry name" value="adk"/>
    <property type="match status" value="1"/>
</dbReference>
<dbReference type="NCBIfam" id="NF001379">
    <property type="entry name" value="PRK00279.1-1"/>
    <property type="match status" value="1"/>
</dbReference>
<dbReference type="NCBIfam" id="NF001380">
    <property type="entry name" value="PRK00279.1-2"/>
    <property type="match status" value="1"/>
</dbReference>
<dbReference type="NCBIfam" id="NF001381">
    <property type="entry name" value="PRK00279.1-3"/>
    <property type="match status" value="1"/>
</dbReference>
<dbReference type="NCBIfam" id="NF011100">
    <property type="entry name" value="PRK14527.1"/>
    <property type="match status" value="1"/>
</dbReference>
<dbReference type="PANTHER" id="PTHR23359">
    <property type="entry name" value="NUCLEOTIDE KINASE"/>
    <property type="match status" value="1"/>
</dbReference>
<dbReference type="Pfam" id="PF00406">
    <property type="entry name" value="ADK"/>
    <property type="match status" value="1"/>
</dbReference>
<dbReference type="Pfam" id="PF05191">
    <property type="entry name" value="ADK_lid"/>
    <property type="match status" value="1"/>
</dbReference>
<dbReference type="PRINTS" id="PR00094">
    <property type="entry name" value="ADENYLTKNASE"/>
</dbReference>
<dbReference type="SUPFAM" id="SSF52540">
    <property type="entry name" value="P-loop containing nucleoside triphosphate hydrolases"/>
    <property type="match status" value="1"/>
</dbReference>
<dbReference type="PROSITE" id="PS00113">
    <property type="entry name" value="ADENYLATE_KINASE"/>
    <property type="match status" value="1"/>
</dbReference>
<reference key="1">
    <citation type="journal article" date="2003" name="Lancet">
        <title>Genome sequence of Vibrio parahaemolyticus: a pathogenic mechanism distinct from that of V. cholerae.</title>
        <authorList>
            <person name="Makino K."/>
            <person name="Oshima K."/>
            <person name="Kurokawa K."/>
            <person name="Yokoyama K."/>
            <person name="Uda T."/>
            <person name="Tagomori K."/>
            <person name="Iijima Y."/>
            <person name="Najima M."/>
            <person name="Nakano M."/>
            <person name="Yamashita A."/>
            <person name="Kubota Y."/>
            <person name="Kimura S."/>
            <person name="Yasunaga T."/>
            <person name="Honda T."/>
            <person name="Shinagawa H."/>
            <person name="Hattori M."/>
            <person name="Iida T."/>
        </authorList>
    </citation>
    <scope>NUCLEOTIDE SEQUENCE [LARGE SCALE GENOMIC DNA]</scope>
    <source>
        <strain>RIMD 2210633</strain>
    </source>
</reference>
<sequence>MRIILLGAPGAGKGTQANFIMDKYGIPQISTGDMLRAAIKAGTELGKQAKAVIDAGQLVSDEIILGLIKERIAQDDCEKGFLLDGFPRTIPQADGLKEMGVEVDYVIEFDVADDVIVERMAGRRAHLPSGRTYHVVYNPPKVEGKDDVTGEDLVVRDDDKEETVRARLGVYHEQTAPLIDYYGKEAAAGKTKYLKFDGTKQVAEVSADIEKALA</sequence>
<name>KAD_VIBPA</name>
<accession>Q87RH4</accession>
<keyword id="KW-0067">ATP-binding</keyword>
<keyword id="KW-0963">Cytoplasm</keyword>
<keyword id="KW-0418">Kinase</keyword>
<keyword id="KW-0545">Nucleotide biosynthesis</keyword>
<keyword id="KW-0547">Nucleotide-binding</keyword>
<keyword id="KW-0808">Transferase</keyword>
<proteinExistence type="inferred from homology"/>
<feature type="chain" id="PRO_0000158883" description="Adenylate kinase">
    <location>
        <begin position="1"/>
        <end position="214"/>
    </location>
</feature>
<feature type="region of interest" description="NMP" evidence="1">
    <location>
        <begin position="30"/>
        <end position="59"/>
    </location>
</feature>
<feature type="region of interest" description="LID" evidence="1">
    <location>
        <begin position="122"/>
        <end position="159"/>
    </location>
</feature>
<feature type="binding site" evidence="1">
    <location>
        <begin position="10"/>
        <end position="15"/>
    </location>
    <ligand>
        <name>ATP</name>
        <dbReference type="ChEBI" id="CHEBI:30616"/>
    </ligand>
</feature>
<feature type="binding site" evidence="1">
    <location>
        <position position="31"/>
    </location>
    <ligand>
        <name>AMP</name>
        <dbReference type="ChEBI" id="CHEBI:456215"/>
    </ligand>
</feature>
<feature type="binding site" evidence="1">
    <location>
        <position position="36"/>
    </location>
    <ligand>
        <name>AMP</name>
        <dbReference type="ChEBI" id="CHEBI:456215"/>
    </ligand>
</feature>
<feature type="binding site" evidence="1">
    <location>
        <begin position="57"/>
        <end position="59"/>
    </location>
    <ligand>
        <name>AMP</name>
        <dbReference type="ChEBI" id="CHEBI:456215"/>
    </ligand>
</feature>
<feature type="binding site" evidence="1">
    <location>
        <begin position="85"/>
        <end position="88"/>
    </location>
    <ligand>
        <name>AMP</name>
        <dbReference type="ChEBI" id="CHEBI:456215"/>
    </ligand>
</feature>
<feature type="binding site" evidence="1">
    <location>
        <position position="92"/>
    </location>
    <ligand>
        <name>AMP</name>
        <dbReference type="ChEBI" id="CHEBI:456215"/>
    </ligand>
</feature>
<feature type="binding site" evidence="1">
    <location>
        <position position="123"/>
    </location>
    <ligand>
        <name>ATP</name>
        <dbReference type="ChEBI" id="CHEBI:30616"/>
    </ligand>
</feature>
<feature type="binding site" evidence="1">
    <location>
        <begin position="132"/>
        <end position="133"/>
    </location>
    <ligand>
        <name>ATP</name>
        <dbReference type="ChEBI" id="CHEBI:30616"/>
    </ligand>
</feature>
<feature type="binding site" evidence="1">
    <location>
        <position position="156"/>
    </location>
    <ligand>
        <name>AMP</name>
        <dbReference type="ChEBI" id="CHEBI:456215"/>
    </ligand>
</feature>
<feature type="binding site" evidence="1">
    <location>
        <position position="167"/>
    </location>
    <ligand>
        <name>AMP</name>
        <dbReference type="ChEBI" id="CHEBI:456215"/>
    </ligand>
</feature>
<feature type="binding site" evidence="1">
    <location>
        <position position="200"/>
    </location>
    <ligand>
        <name>ATP</name>
        <dbReference type="ChEBI" id="CHEBI:30616"/>
    </ligand>
</feature>
<organism>
    <name type="scientific">Vibrio parahaemolyticus serotype O3:K6 (strain RIMD 2210633)</name>
    <dbReference type="NCBI Taxonomy" id="223926"/>
    <lineage>
        <taxon>Bacteria</taxon>
        <taxon>Pseudomonadati</taxon>
        <taxon>Pseudomonadota</taxon>
        <taxon>Gammaproteobacteria</taxon>
        <taxon>Vibrionales</taxon>
        <taxon>Vibrionaceae</taxon>
        <taxon>Vibrio</taxon>
    </lineage>
</organism>
<protein>
    <recommendedName>
        <fullName evidence="1">Adenylate kinase</fullName>
        <shortName evidence="1">AK</shortName>
        <ecNumber evidence="1">2.7.4.3</ecNumber>
    </recommendedName>
    <alternativeName>
        <fullName evidence="1">ATP-AMP transphosphorylase</fullName>
    </alternativeName>
    <alternativeName>
        <fullName evidence="1">ATP:AMP phosphotransferase</fullName>
    </alternativeName>
    <alternativeName>
        <fullName evidence="1">Adenylate monophosphate kinase</fullName>
    </alternativeName>
</protein>
<gene>
    <name evidence="1" type="primary">adk</name>
    <name type="ordered locus">VP0822</name>
</gene>
<comment type="function">
    <text evidence="1">Catalyzes the reversible transfer of the terminal phosphate group between ATP and AMP. Plays an important role in cellular energy homeostasis and in adenine nucleotide metabolism.</text>
</comment>
<comment type="catalytic activity">
    <reaction evidence="1">
        <text>AMP + ATP = 2 ADP</text>
        <dbReference type="Rhea" id="RHEA:12973"/>
        <dbReference type="ChEBI" id="CHEBI:30616"/>
        <dbReference type="ChEBI" id="CHEBI:456215"/>
        <dbReference type="ChEBI" id="CHEBI:456216"/>
        <dbReference type="EC" id="2.7.4.3"/>
    </reaction>
</comment>
<comment type="pathway">
    <text evidence="1">Purine metabolism; AMP biosynthesis via salvage pathway; AMP from ADP: step 1/1.</text>
</comment>
<comment type="subunit">
    <text evidence="1">Monomer.</text>
</comment>
<comment type="subcellular location">
    <subcellularLocation>
        <location evidence="1">Cytoplasm</location>
    </subcellularLocation>
</comment>
<comment type="domain">
    <text evidence="1">Consists of three domains, a large central CORE domain and two small peripheral domains, NMPbind and LID, which undergo movements during catalysis. The LID domain closes over the site of phosphoryl transfer upon ATP binding. Assembling and dissambling the active center during each catalytic cycle provides an effective means to prevent ATP hydrolysis.</text>
</comment>
<comment type="similarity">
    <text evidence="1">Belongs to the adenylate kinase family.</text>
</comment>